<keyword id="KW-0963">Cytoplasm</keyword>
<keyword id="KW-0238">DNA-binding</keyword>
<keyword id="KW-0539">Nucleus</keyword>
<keyword id="KW-0597">Phosphoprotein</keyword>
<keyword id="KW-1185">Reference proteome</keyword>
<keyword id="KW-0804">Transcription</keyword>
<keyword id="KW-0805">Transcription regulation</keyword>
<feature type="chain" id="PRO_0000204075" description="Protein c-ets-1-B">
    <location>
        <begin position="1" status="less than"/>
        <end position="268"/>
    </location>
</feature>
<feature type="DNA-binding region" description="ETS" evidence="3">
    <location>
        <begin position="162"/>
        <end position="242"/>
    </location>
</feature>
<feature type="region of interest" description="Helix HI-1" evidence="2">
    <location>
        <begin position="131"/>
        <end position="139"/>
    </location>
</feature>
<feature type="region of interest" description="Helix HI-2" evidence="2">
    <location>
        <begin position="150"/>
        <end position="157"/>
    </location>
</feature>
<feature type="region of interest" description="Helix H4" evidence="2">
    <location>
        <begin position="245"/>
        <end position="249"/>
    </location>
</feature>
<feature type="region of interest" description="Helix H5" evidence="2">
    <location>
        <begin position="253"/>
        <end position="259"/>
    </location>
</feature>
<feature type="non-terminal residue">
    <location>
        <position position="1"/>
    </location>
</feature>
<name>ETS1B_XENLA</name>
<protein>
    <recommendedName>
        <fullName>Protein c-ets-1-B</fullName>
        <shortName>C-ets-1B</shortName>
    </recommendedName>
    <alternativeName>
        <fullName>XE1-B</fullName>
    </alternativeName>
</protein>
<evidence type="ECO:0000250" key="1">
    <source>
        <dbReference type="UniProtKB" id="P14921"/>
    </source>
</evidence>
<evidence type="ECO:0000250" key="2">
    <source>
        <dbReference type="UniProtKB" id="P27577"/>
    </source>
</evidence>
<evidence type="ECO:0000255" key="3">
    <source>
        <dbReference type="PROSITE-ProRule" id="PRU00237"/>
    </source>
</evidence>
<evidence type="ECO:0000305" key="4"/>
<comment type="function">
    <text evidence="1">Transcription factor. Directly controls the expression of cytokine and chemokine genes in a wide variety of different cellular contexts.</text>
</comment>
<comment type="activity regulation">
    <text evidence="2">Autoinhibited by a module composed of four alpha helices (HI-1, HI-2, H4, and H5) that flank the DNA-binding ETS domain, reducing the affinity for DNA.</text>
</comment>
<comment type="subunit">
    <text evidence="1">Binds DNA as a homodimer; homodimerization is required for transcription activation.</text>
</comment>
<comment type="subcellular location">
    <subcellularLocation>
        <location evidence="1">Nucleus</location>
    </subcellularLocation>
    <subcellularLocation>
        <location evidence="1">Cytoplasm</location>
    </subcellularLocation>
</comment>
<comment type="similarity">
    <text evidence="4">Belongs to the ETS family.</text>
</comment>
<accession>P18756</accession>
<sequence length="268" mass="30772">EFSEPSFITESYQTLHPISSEELLSLKYESDYPLGLLRDPLQPESLQGDYFTIKQEVVSPDNMCLGRISRGKLGGQESFESIESHDSCDRLTQSWSSQSSYNSLQRVPSYDSFDSEDYPPALPSHKSKGTFKDYVRDRAELNKDKPVIPAAALAGYTGSGPIQLWQFLLELLTDKSCQSFISWTGDGWEFKLSDPDEVARRWGKRKNKPKMNYEKLSRGLRYYYDKNIIHKTAGKRYVYRFVCDLQSLLGYVPEELHAMLDVKPDTDE</sequence>
<reference key="1">
    <citation type="journal article" date="1990" name="Nucleic Acids Res.">
        <title>Characterization of Xenopus laevis cDNA clones of the c-ets-1 proto-oncogene.</title>
        <authorList>
            <person name="Stiegler P."/>
            <person name="Wolff C.M."/>
            <person name="Baltzinger M."/>
            <person name="Hirzlin J."/>
            <person name="Senan F."/>
            <person name="Meyer D."/>
            <person name="Ghysdael J."/>
            <person name="Stehelin D."/>
            <person name="Befort N."/>
            <person name="Remy P."/>
        </authorList>
    </citation>
    <scope>NUCLEOTIDE SEQUENCE [MRNA]</scope>
    <source>
        <tissue>Ovary</tissue>
    </source>
</reference>
<reference key="2">
    <citation type="submission" date="1992-04" db="EMBL/GenBank/DDBJ databases">
        <authorList>
            <person name="Salvati A.L."/>
            <person name="Morabito S."/>
            <person name="Merendino X."/>
            <person name="Carnevali F."/>
        </authorList>
    </citation>
    <scope>NUCLEOTIDE SEQUENCE [MRNA]</scope>
    <source>
        <tissue>Ovary</tissue>
    </source>
</reference>
<gene>
    <name type="primary">ets1-b</name>
</gene>
<organism>
    <name type="scientific">Xenopus laevis</name>
    <name type="common">African clawed frog</name>
    <dbReference type="NCBI Taxonomy" id="8355"/>
    <lineage>
        <taxon>Eukaryota</taxon>
        <taxon>Metazoa</taxon>
        <taxon>Chordata</taxon>
        <taxon>Craniata</taxon>
        <taxon>Vertebrata</taxon>
        <taxon>Euteleostomi</taxon>
        <taxon>Amphibia</taxon>
        <taxon>Batrachia</taxon>
        <taxon>Anura</taxon>
        <taxon>Pipoidea</taxon>
        <taxon>Pipidae</taxon>
        <taxon>Xenopodinae</taxon>
        <taxon>Xenopus</taxon>
        <taxon>Xenopus</taxon>
    </lineage>
</organism>
<proteinExistence type="evidence at transcript level"/>
<dbReference type="EMBL" id="X52691">
    <property type="protein sequence ID" value="CAA36918.1"/>
    <property type="molecule type" value="mRNA"/>
</dbReference>
<dbReference type="EMBL" id="X65166">
    <property type="protein sequence ID" value="CAA46284.1"/>
    <property type="molecule type" value="mRNA"/>
</dbReference>
<dbReference type="PIR" id="S11224">
    <property type="entry name" value="S11224"/>
</dbReference>
<dbReference type="SMR" id="P18756"/>
<dbReference type="AGR" id="Xenbase:XB-GENE-6252153"/>
<dbReference type="Xenbase" id="XB-GENE-6252153">
    <property type="gene designation" value="ets1.L"/>
</dbReference>
<dbReference type="OrthoDB" id="10067219at2759"/>
<dbReference type="Proteomes" id="UP000186698">
    <property type="component" value="Unplaced"/>
</dbReference>
<dbReference type="GO" id="GO:0005737">
    <property type="term" value="C:cytoplasm"/>
    <property type="evidence" value="ECO:0007669"/>
    <property type="project" value="UniProtKB-SubCell"/>
</dbReference>
<dbReference type="GO" id="GO:0005634">
    <property type="term" value="C:nucleus"/>
    <property type="evidence" value="ECO:0000318"/>
    <property type="project" value="GO_Central"/>
</dbReference>
<dbReference type="GO" id="GO:0000981">
    <property type="term" value="F:DNA-binding transcription factor activity, RNA polymerase II-specific"/>
    <property type="evidence" value="ECO:0000318"/>
    <property type="project" value="GO_Central"/>
</dbReference>
<dbReference type="GO" id="GO:0043565">
    <property type="term" value="F:sequence-specific DNA binding"/>
    <property type="evidence" value="ECO:0007669"/>
    <property type="project" value="InterPro"/>
</dbReference>
<dbReference type="GO" id="GO:0030154">
    <property type="term" value="P:cell differentiation"/>
    <property type="evidence" value="ECO:0000318"/>
    <property type="project" value="GO_Central"/>
</dbReference>
<dbReference type="GO" id="GO:0010595">
    <property type="term" value="P:positive regulation of endothelial cell migration"/>
    <property type="evidence" value="ECO:0000250"/>
    <property type="project" value="UniProtKB"/>
</dbReference>
<dbReference type="GO" id="GO:0045765">
    <property type="term" value="P:regulation of angiogenesis"/>
    <property type="evidence" value="ECO:0000250"/>
    <property type="project" value="UniProtKB"/>
</dbReference>
<dbReference type="GO" id="GO:0006357">
    <property type="term" value="P:regulation of transcription by RNA polymerase II"/>
    <property type="evidence" value="ECO:0000318"/>
    <property type="project" value="GO_Central"/>
</dbReference>
<dbReference type="FunFam" id="1.10.10.10:FF:000097">
    <property type="entry name" value="Protein c-ets-1 isoform 1"/>
    <property type="match status" value="1"/>
</dbReference>
<dbReference type="Gene3D" id="1.10.10.10">
    <property type="entry name" value="Winged helix-like DNA-binding domain superfamily/Winged helix DNA-binding domain"/>
    <property type="match status" value="1"/>
</dbReference>
<dbReference type="InterPro" id="IPR045688">
    <property type="entry name" value="Ets1_N_flank"/>
</dbReference>
<dbReference type="InterPro" id="IPR000418">
    <property type="entry name" value="Ets_dom"/>
</dbReference>
<dbReference type="InterPro" id="IPR046328">
    <property type="entry name" value="ETS_fam"/>
</dbReference>
<dbReference type="InterPro" id="IPR036388">
    <property type="entry name" value="WH-like_DNA-bd_sf"/>
</dbReference>
<dbReference type="InterPro" id="IPR036390">
    <property type="entry name" value="WH_DNA-bd_sf"/>
</dbReference>
<dbReference type="PANTHER" id="PTHR11849">
    <property type="entry name" value="ETS"/>
    <property type="match status" value="1"/>
</dbReference>
<dbReference type="PANTHER" id="PTHR11849:SF209">
    <property type="entry name" value="ETS TRANSLOCATION VARIANT 2"/>
    <property type="match status" value="1"/>
</dbReference>
<dbReference type="Pfam" id="PF00178">
    <property type="entry name" value="Ets"/>
    <property type="match status" value="1"/>
</dbReference>
<dbReference type="Pfam" id="PF19525">
    <property type="entry name" value="Ets1_N_flank"/>
    <property type="match status" value="1"/>
</dbReference>
<dbReference type="PRINTS" id="PR00454">
    <property type="entry name" value="ETSDOMAIN"/>
</dbReference>
<dbReference type="SMART" id="SM00413">
    <property type="entry name" value="ETS"/>
    <property type="match status" value="1"/>
</dbReference>
<dbReference type="SUPFAM" id="SSF46785">
    <property type="entry name" value="Winged helix' DNA-binding domain"/>
    <property type="match status" value="1"/>
</dbReference>
<dbReference type="PROSITE" id="PS00345">
    <property type="entry name" value="ETS_DOMAIN_1"/>
    <property type="match status" value="1"/>
</dbReference>
<dbReference type="PROSITE" id="PS00346">
    <property type="entry name" value="ETS_DOMAIN_2"/>
    <property type="match status" value="1"/>
</dbReference>
<dbReference type="PROSITE" id="PS50061">
    <property type="entry name" value="ETS_DOMAIN_3"/>
    <property type="match status" value="1"/>
</dbReference>